<proteinExistence type="inferred from homology"/>
<evidence type="ECO:0000250" key="1"/>
<evidence type="ECO:0000250" key="2">
    <source>
        <dbReference type="UniProtKB" id="P94522"/>
    </source>
</evidence>
<evidence type="ECO:0000255" key="3"/>
<evidence type="ECO:0000305" key="4"/>
<organism>
    <name type="scientific">Aspergillus fumigatus (strain ATCC MYA-4609 / CBS 101355 / FGSC A1100 / Af293)</name>
    <name type="common">Neosartorya fumigata</name>
    <dbReference type="NCBI Taxonomy" id="330879"/>
    <lineage>
        <taxon>Eukaryota</taxon>
        <taxon>Fungi</taxon>
        <taxon>Dikarya</taxon>
        <taxon>Ascomycota</taxon>
        <taxon>Pezizomycotina</taxon>
        <taxon>Eurotiomycetes</taxon>
        <taxon>Eurotiomycetidae</taxon>
        <taxon>Eurotiales</taxon>
        <taxon>Aspergillaceae</taxon>
        <taxon>Aspergillus</taxon>
        <taxon>Aspergillus subgen. Fumigati</taxon>
    </lineage>
</organism>
<accession>Q4WYX7</accession>
<feature type="signal peptide" evidence="3">
    <location>
        <begin position="1"/>
        <end position="19"/>
    </location>
</feature>
<feature type="chain" id="PRO_0000394620" description="Probable arabinan endo-1,5-alpha-L-arabinosidase A">
    <location>
        <begin position="20"/>
        <end position="321"/>
    </location>
</feature>
<feature type="active site" description="Proton acceptor" evidence="2">
    <location>
        <position position="34"/>
    </location>
</feature>
<feature type="active site" description="Proton donor" evidence="2">
    <location>
        <position position="200"/>
    </location>
</feature>
<feature type="site" description="Important for catalytic activity, responsible for pKa modulation of the active site Glu and correct orientation of both the proton donor and substrate" evidence="2">
    <location>
        <position position="149"/>
    </location>
</feature>
<dbReference type="EC" id="3.2.1.99"/>
<dbReference type="EMBL" id="AAHF01000002">
    <property type="protein sequence ID" value="EAL92126.1"/>
    <property type="molecule type" value="Genomic_DNA"/>
</dbReference>
<dbReference type="RefSeq" id="XP_754164.1">
    <property type="nucleotide sequence ID" value="XM_749071.1"/>
</dbReference>
<dbReference type="SMR" id="Q4WYX7"/>
<dbReference type="STRING" id="330879.Q4WYX7"/>
<dbReference type="EnsemblFungi" id="EAL92126">
    <property type="protein sequence ID" value="EAL92126"/>
    <property type="gene ID" value="AFUA_3G14620"/>
</dbReference>
<dbReference type="GeneID" id="3512291"/>
<dbReference type="KEGG" id="afm:AFUA_3G14620"/>
<dbReference type="VEuPathDB" id="FungiDB:Afu3g14620"/>
<dbReference type="eggNOG" id="ENOG502QTQG">
    <property type="taxonomic scope" value="Eukaryota"/>
</dbReference>
<dbReference type="HOGENOM" id="CLU_009397_5_0_1"/>
<dbReference type="InParanoid" id="Q4WYX7"/>
<dbReference type="OMA" id="GHLWAPD"/>
<dbReference type="OrthoDB" id="195678at2759"/>
<dbReference type="UniPathway" id="UPA00667"/>
<dbReference type="Proteomes" id="UP000002530">
    <property type="component" value="Chromosome 3"/>
</dbReference>
<dbReference type="GO" id="GO:0005576">
    <property type="term" value="C:extracellular region"/>
    <property type="evidence" value="ECO:0007669"/>
    <property type="project" value="UniProtKB-SubCell"/>
</dbReference>
<dbReference type="GO" id="GO:0046558">
    <property type="term" value="F:arabinan endo-1,5-alpha-L-arabinosidase activity"/>
    <property type="evidence" value="ECO:0007669"/>
    <property type="project" value="UniProtKB-EC"/>
</dbReference>
<dbReference type="GO" id="GO:0031222">
    <property type="term" value="P:arabinan catabolic process"/>
    <property type="evidence" value="ECO:0007669"/>
    <property type="project" value="UniProtKB-UniPathway"/>
</dbReference>
<dbReference type="GO" id="GO:0045493">
    <property type="term" value="P:xylan catabolic process"/>
    <property type="evidence" value="ECO:0007669"/>
    <property type="project" value="UniProtKB-KW"/>
</dbReference>
<dbReference type="CDD" id="cd18831">
    <property type="entry name" value="GH43_AnAbnA-like"/>
    <property type="match status" value="1"/>
</dbReference>
<dbReference type="FunFam" id="2.115.10.20:FF:000005">
    <property type="entry name" value="Arabinan endo-1,5-alpha-L-arabinosidase"/>
    <property type="match status" value="1"/>
</dbReference>
<dbReference type="Gene3D" id="2.115.10.20">
    <property type="entry name" value="Glycosyl hydrolase domain, family 43"/>
    <property type="match status" value="1"/>
</dbReference>
<dbReference type="InterPro" id="IPR050727">
    <property type="entry name" value="GH43_arabinanases"/>
</dbReference>
<dbReference type="InterPro" id="IPR006710">
    <property type="entry name" value="Glyco_hydro_43"/>
</dbReference>
<dbReference type="InterPro" id="IPR016840">
    <property type="entry name" value="Glyco_hydro_43_endo_a_Ara-ase"/>
</dbReference>
<dbReference type="InterPro" id="IPR023296">
    <property type="entry name" value="Glyco_hydro_beta-prop_sf"/>
</dbReference>
<dbReference type="PANTHER" id="PTHR43301">
    <property type="entry name" value="ARABINAN ENDO-1,5-ALPHA-L-ARABINOSIDASE"/>
    <property type="match status" value="1"/>
</dbReference>
<dbReference type="PANTHER" id="PTHR43301:SF3">
    <property type="entry name" value="ARABINAN ENDO-1,5-ALPHA-L-ARABINOSIDASE A-RELATED"/>
    <property type="match status" value="1"/>
</dbReference>
<dbReference type="Pfam" id="PF04616">
    <property type="entry name" value="Glyco_hydro_43"/>
    <property type="match status" value="1"/>
</dbReference>
<dbReference type="PIRSF" id="PIRSF026534">
    <property type="entry name" value="Endo_alpha-L-arabinosidase"/>
    <property type="match status" value="1"/>
</dbReference>
<dbReference type="SUPFAM" id="SSF75005">
    <property type="entry name" value="Arabinanase/levansucrase/invertase"/>
    <property type="match status" value="1"/>
</dbReference>
<name>ABNA_ASPFU</name>
<comment type="function">
    <text evidence="1">Endo-1,5-alpha-L-arabinanase involved in degradation of pectin. Its preferred substrate is linear 1,5-alpha-L-arabinan (By similarity).</text>
</comment>
<comment type="catalytic activity">
    <reaction>
        <text>Endohydrolysis of (1-&gt;5)-alpha-arabinofuranosidic linkages in (1-&gt;5)-arabinans.</text>
        <dbReference type="EC" id="3.2.1.99"/>
    </reaction>
</comment>
<comment type="pathway">
    <text>Glycan metabolism; L-arabinan degradation.</text>
</comment>
<comment type="subcellular location">
    <subcellularLocation>
        <location evidence="1">Secreted</location>
    </subcellularLocation>
</comment>
<comment type="similarity">
    <text evidence="4">Belongs to the glycosyl hydrolase 43 family.</text>
</comment>
<gene>
    <name type="primary">abnA</name>
    <name type="ORF">AFUA_3G14620</name>
</gene>
<reference key="1">
    <citation type="journal article" date="2005" name="Nature">
        <title>Genomic sequence of the pathogenic and allergenic filamentous fungus Aspergillus fumigatus.</title>
        <authorList>
            <person name="Nierman W.C."/>
            <person name="Pain A."/>
            <person name="Anderson M.J."/>
            <person name="Wortman J.R."/>
            <person name="Kim H.S."/>
            <person name="Arroyo J."/>
            <person name="Berriman M."/>
            <person name="Abe K."/>
            <person name="Archer D.B."/>
            <person name="Bermejo C."/>
            <person name="Bennett J.W."/>
            <person name="Bowyer P."/>
            <person name="Chen D."/>
            <person name="Collins M."/>
            <person name="Coulsen R."/>
            <person name="Davies R."/>
            <person name="Dyer P.S."/>
            <person name="Farman M.L."/>
            <person name="Fedorova N."/>
            <person name="Fedorova N.D."/>
            <person name="Feldblyum T.V."/>
            <person name="Fischer R."/>
            <person name="Fosker N."/>
            <person name="Fraser A."/>
            <person name="Garcia J.L."/>
            <person name="Garcia M.J."/>
            <person name="Goble A."/>
            <person name="Goldman G.H."/>
            <person name="Gomi K."/>
            <person name="Griffith-Jones S."/>
            <person name="Gwilliam R."/>
            <person name="Haas B.J."/>
            <person name="Haas H."/>
            <person name="Harris D.E."/>
            <person name="Horiuchi H."/>
            <person name="Huang J."/>
            <person name="Humphray S."/>
            <person name="Jimenez J."/>
            <person name="Keller N."/>
            <person name="Khouri H."/>
            <person name="Kitamoto K."/>
            <person name="Kobayashi T."/>
            <person name="Konzack S."/>
            <person name="Kulkarni R."/>
            <person name="Kumagai T."/>
            <person name="Lafton A."/>
            <person name="Latge J.-P."/>
            <person name="Li W."/>
            <person name="Lord A."/>
            <person name="Lu C."/>
            <person name="Majoros W.H."/>
            <person name="May G.S."/>
            <person name="Miller B.L."/>
            <person name="Mohamoud Y."/>
            <person name="Molina M."/>
            <person name="Monod M."/>
            <person name="Mouyna I."/>
            <person name="Mulligan S."/>
            <person name="Murphy L.D."/>
            <person name="O'Neil S."/>
            <person name="Paulsen I."/>
            <person name="Penalva M.A."/>
            <person name="Pertea M."/>
            <person name="Price C."/>
            <person name="Pritchard B.L."/>
            <person name="Quail M.A."/>
            <person name="Rabbinowitsch E."/>
            <person name="Rawlins N."/>
            <person name="Rajandream M.A."/>
            <person name="Reichard U."/>
            <person name="Renauld H."/>
            <person name="Robson G.D."/>
            <person name="Rodriguez de Cordoba S."/>
            <person name="Rodriguez-Pena J.M."/>
            <person name="Ronning C.M."/>
            <person name="Rutter S."/>
            <person name="Salzberg S.L."/>
            <person name="Sanchez M."/>
            <person name="Sanchez-Ferrero J.C."/>
            <person name="Saunders D."/>
            <person name="Seeger K."/>
            <person name="Squares R."/>
            <person name="Squares S."/>
            <person name="Takeuchi M."/>
            <person name="Tekaia F."/>
            <person name="Turner G."/>
            <person name="Vazquez de Aldana C.R."/>
            <person name="Weidman J."/>
            <person name="White O."/>
            <person name="Woodward J.R."/>
            <person name="Yu J.-H."/>
            <person name="Fraser C.M."/>
            <person name="Galagan J.E."/>
            <person name="Asai K."/>
            <person name="Machida M."/>
            <person name="Hall N."/>
            <person name="Barrell B.G."/>
            <person name="Denning D.W."/>
        </authorList>
    </citation>
    <scope>NUCLEOTIDE SEQUENCE [LARGE SCALE GENOMIC DNA]</scope>
    <source>
        <strain>ATCC MYA-4609 / CBS 101355 / FGSC A1100 / Af293</strain>
    </source>
</reference>
<protein>
    <recommendedName>
        <fullName>Probable arabinan endo-1,5-alpha-L-arabinosidase A</fullName>
        <ecNumber>3.2.1.99</ecNumber>
    </recommendedName>
    <alternativeName>
        <fullName>Endo-1,5-alpha-L-arabinanase A</fullName>
        <shortName>ABN A</shortName>
    </alternativeName>
</protein>
<keyword id="KW-0119">Carbohydrate metabolism</keyword>
<keyword id="KW-0326">Glycosidase</keyword>
<keyword id="KW-0378">Hydrolase</keyword>
<keyword id="KW-0624">Polysaccharide degradation</keyword>
<keyword id="KW-1185">Reference proteome</keyword>
<keyword id="KW-0964">Secreted</keyword>
<keyword id="KW-0732">Signal</keyword>
<keyword id="KW-0858">Xylan degradation</keyword>
<sequence>MSASVFVVVASCLAALAHGYANPGSCLGACNVHDPALIRRESDGKYFRFSTGNKISYASSSSIEGPWTVLGSVLPSGSSIDLPGNDDLWAPDVSLVNGVYHVYYSVSTFGSQSSAIGLATSSTMDLNSWTDHGSTGIQSSSSKPYNAIDGNLFKDGGTYYMNFGSFWHDIYQAPMNSAATSVASSSYNIAYNPSGTHAVEGAFMYKYGNYYYLFFSAGICCGYDTSRPASGEEYKIKVCRSTSATGNFVDANGVACTNGGGTVVLESHGNVYGPGGQGVFTDPSLGPILYYHYVDTTIGYADSQKLFGWNKIDFSSGWPVV</sequence>